<evidence type="ECO:0000255" key="1">
    <source>
        <dbReference type="HAMAP-Rule" id="MF_00472"/>
    </source>
</evidence>
<keyword id="KW-0489">Methyltransferase</keyword>
<keyword id="KW-0949">S-adenosyl-L-methionine</keyword>
<keyword id="KW-0808">Transferase</keyword>
<keyword id="KW-0831">Ubiquinone biosynthesis</keyword>
<sequence length="232" mass="25153">MTNADPHELQKFSDLAHRWWDPNAEFKPLHDLNPVRLGWIDAHAHLAGKRALDIGCGGGILSESMAGLGAQVKGIDLSTEALGVADLHSLESGISVDYEAIAAEAIAAREPGTYDVVTCMEMLEHVPSPGDVVAACATLVKPGGWVFFSTLNRNLKSYLFAVIGAEYIAQMLPKGTHDYARFIRPSELAGFVRATDLHIVEIKGITYHPIGKRFALSNDTDINYLVACRRGA</sequence>
<reference key="1">
    <citation type="journal article" date="2009" name="J. Bacteriol.">
        <title>The genome of Burkholderia cenocepacia J2315, an epidemic pathogen of cystic fibrosis patients.</title>
        <authorList>
            <person name="Holden M.T."/>
            <person name="Seth-Smith H.M."/>
            <person name="Crossman L.C."/>
            <person name="Sebaihia M."/>
            <person name="Bentley S.D."/>
            <person name="Cerdeno-Tarraga A.M."/>
            <person name="Thomson N.R."/>
            <person name="Bason N."/>
            <person name="Quail M.A."/>
            <person name="Sharp S."/>
            <person name="Cherevach I."/>
            <person name="Churcher C."/>
            <person name="Goodhead I."/>
            <person name="Hauser H."/>
            <person name="Holroyd N."/>
            <person name="Mungall K."/>
            <person name="Scott P."/>
            <person name="Walker D."/>
            <person name="White B."/>
            <person name="Rose H."/>
            <person name="Iversen P."/>
            <person name="Mil-Homens D."/>
            <person name="Rocha E.P."/>
            <person name="Fialho A.M."/>
            <person name="Baldwin A."/>
            <person name="Dowson C."/>
            <person name="Barrell B.G."/>
            <person name="Govan J.R."/>
            <person name="Vandamme P."/>
            <person name="Hart C.A."/>
            <person name="Mahenthiralingam E."/>
            <person name="Parkhill J."/>
        </authorList>
    </citation>
    <scope>NUCLEOTIDE SEQUENCE [LARGE SCALE GENOMIC DNA]</scope>
    <source>
        <strain>ATCC BAA-245 / DSM 16553 / LMG 16656 / NCTC 13227 / J2315 / CF5610</strain>
    </source>
</reference>
<accession>B4EB49</accession>
<proteinExistence type="inferred from homology"/>
<name>UBIG_BURCJ</name>
<feature type="chain" id="PRO_1000199671" description="Ubiquinone biosynthesis O-methyltransferase">
    <location>
        <begin position="1"/>
        <end position="232"/>
    </location>
</feature>
<feature type="binding site" evidence="1">
    <location>
        <position position="36"/>
    </location>
    <ligand>
        <name>S-adenosyl-L-methionine</name>
        <dbReference type="ChEBI" id="CHEBI:59789"/>
    </ligand>
</feature>
<feature type="binding site" evidence="1">
    <location>
        <position position="55"/>
    </location>
    <ligand>
        <name>S-adenosyl-L-methionine</name>
        <dbReference type="ChEBI" id="CHEBI:59789"/>
    </ligand>
</feature>
<feature type="binding site" evidence="1">
    <location>
        <position position="76"/>
    </location>
    <ligand>
        <name>S-adenosyl-L-methionine</name>
        <dbReference type="ChEBI" id="CHEBI:59789"/>
    </ligand>
</feature>
<feature type="binding site" evidence="1">
    <location>
        <position position="120"/>
    </location>
    <ligand>
        <name>S-adenosyl-L-methionine</name>
        <dbReference type="ChEBI" id="CHEBI:59789"/>
    </ligand>
</feature>
<organism>
    <name type="scientific">Burkholderia cenocepacia (strain ATCC BAA-245 / DSM 16553 / LMG 16656 / NCTC 13227 / J2315 / CF5610)</name>
    <name type="common">Burkholderia cepacia (strain J2315)</name>
    <dbReference type="NCBI Taxonomy" id="216591"/>
    <lineage>
        <taxon>Bacteria</taxon>
        <taxon>Pseudomonadati</taxon>
        <taxon>Pseudomonadota</taxon>
        <taxon>Betaproteobacteria</taxon>
        <taxon>Burkholderiales</taxon>
        <taxon>Burkholderiaceae</taxon>
        <taxon>Burkholderia</taxon>
        <taxon>Burkholderia cepacia complex</taxon>
    </lineage>
</organism>
<comment type="function">
    <text evidence="1">O-methyltransferase that catalyzes the 2 O-methylation steps in the ubiquinone biosynthetic pathway.</text>
</comment>
<comment type="catalytic activity">
    <reaction evidence="1">
        <text>a 3-demethylubiquinol + S-adenosyl-L-methionine = a ubiquinol + S-adenosyl-L-homocysteine + H(+)</text>
        <dbReference type="Rhea" id="RHEA:44380"/>
        <dbReference type="Rhea" id="RHEA-COMP:9566"/>
        <dbReference type="Rhea" id="RHEA-COMP:10914"/>
        <dbReference type="ChEBI" id="CHEBI:15378"/>
        <dbReference type="ChEBI" id="CHEBI:17976"/>
        <dbReference type="ChEBI" id="CHEBI:57856"/>
        <dbReference type="ChEBI" id="CHEBI:59789"/>
        <dbReference type="ChEBI" id="CHEBI:84422"/>
        <dbReference type="EC" id="2.1.1.64"/>
    </reaction>
</comment>
<comment type="catalytic activity">
    <reaction evidence="1">
        <text>a 3-(all-trans-polyprenyl)benzene-1,2-diol + S-adenosyl-L-methionine = a 2-methoxy-6-(all-trans-polyprenyl)phenol + S-adenosyl-L-homocysteine + H(+)</text>
        <dbReference type="Rhea" id="RHEA:31411"/>
        <dbReference type="Rhea" id="RHEA-COMP:9550"/>
        <dbReference type="Rhea" id="RHEA-COMP:9551"/>
        <dbReference type="ChEBI" id="CHEBI:15378"/>
        <dbReference type="ChEBI" id="CHEBI:57856"/>
        <dbReference type="ChEBI" id="CHEBI:59789"/>
        <dbReference type="ChEBI" id="CHEBI:62729"/>
        <dbReference type="ChEBI" id="CHEBI:62731"/>
        <dbReference type="EC" id="2.1.1.222"/>
    </reaction>
</comment>
<comment type="pathway">
    <text evidence="1">Cofactor biosynthesis; ubiquinone biosynthesis.</text>
</comment>
<comment type="similarity">
    <text evidence="1">Belongs to the methyltransferase superfamily. UbiG/COQ3 family.</text>
</comment>
<gene>
    <name evidence="1" type="primary">ubiG</name>
    <name type="ordered locus">BceJ2315_28950</name>
    <name type="ORF">BCAL2959</name>
</gene>
<dbReference type="EC" id="2.1.1.222" evidence="1"/>
<dbReference type="EC" id="2.1.1.64" evidence="1"/>
<dbReference type="EMBL" id="AM747720">
    <property type="protein sequence ID" value="CAR53263.1"/>
    <property type="molecule type" value="Genomic_DNA"/>
</dbReference>
<dbReference type="RefSeq" id="WP_006486844.1">
    <property type="nucleotide sequence ID" value="NC_011000.1"/>
</dbReference>
<dbReference type="SMR" id="B4EB49"/>
<dbReference type="GeneID" id="56557482"/>
<dbReference type="KEGG" id="bcj:BCAL2959"/>
<dbReference type="eggNOG" id="COG2227">
    <property type="taxonomic scope" value="Bacteria"/>
</dbReference>
<dbReference type="HOGENOM" id="CLU_042432_5_0_4"/>
<dbReference type="BioCyc" id="BCEN216591:G1G1V-3268-MONOMER"/>
<dbReference type="UniPathway" id="UPA00232"/>
<dbReference type="Proteomes" id="UP000001035">
    <property type="component" value="Chromosome 1"/>
</dbReference>
<dbReference type="GO" id="GO:0102208">
    <property type="term" value="F:2-polyprenyl-6-hydroxyphenol methylase activity"/>
    <property type="evidence" value="ECO:0007669"/>
    <property type="project" value="UniProtKB-EC"/>
</dbReference>
<dbReference type="GO" id="GO:0061542">
    <property type="term" value="F:3-demethylubiquinol 3-O-methyltransferase activity"/>
    <property type="evidence" value="ECO:0007669"/>
    <property type="project" value="UniProtKB-UniRule"/>
</dbReference>
<dbReference type="GO" id="GO:0010420">
    <property type="term" value="F:polyprenyldihydroxybenzoate methyltransferase activity"/>
    <property type="evidence" value="ECO:0007669"/>
    <property type="project" value="InterPro"/>
</dbReference>
<dbReference type="GO" id="GO:0032259">
    <property type="term" value="P:methylation"/>
    <property type="evidence" value="ECO:0007669"/>
    <property type="project" value="UniProtKB-KW"/>
</dbReference>
<dbReference type="CDD" id="cd02440">
    <property type="entry name" value="AdoMet_MTases"/>
    <property type="match status" value="1"/>
</dbReference>
<dbReference type="FunFam" id="3.40.50.150:FF:000028">
    <property type="entry name" value="Ubiquinone biosynthesis O-methyltransferase"/>
    <property type="match status" value="1"/>
</dbReference>
<dbReference type="Gene3D" id="3.40.50.150">
    <property type="entry name" value="Vaccinia Virus protein VP39"/>
    <property type="match status" value="1"/>
</dbReference>
<dbReference type="HAMAP" id="MF_00472">
    <property type="entry name" value="UbiG"/>
    <property type="match status" value="1"/>
</dbReference>
<dbReference type="InterPro" id="IPR029063">
    <property type="entry name" value="SAM-dependent_MTases_sf"/>
</dbReference>
<dbReference type="InterPro" id="IPR010233">
    <property type="entry name" value="UbiG_MeTrfase"/>
</dbReference>
<dbReference type="NCBIfam" id="TIGR01983">
    <property type="entry name" value="UbiG"/>
    <property type="match status" value="1"/>
</dbReference>
<dbReference type="PANTHER" id="PTHR43464">
    <property type="entry name" value="METHYLTRANSFERASE"/>
    <property type="match status" value="1"/>
</dbReference>
<dbReference type="PANTHER" id="PTHR43464:SF19">
    <property type="entry name" value="UBIQUINONE BIOSYNTHESIS O-METHYLTRANSFERASE, MITOCHONDRIAL"/>
    <property type="match status" value="1"/>
</dbReference>
<dbReference type="Pfam" id="PF13489">
    <property type="entry name" value="Methyltransf_23"/>
    <property type="match status" value="1"/>
</dbReference>
<dbReference type="SUPFAM" id="SSF53335">
    <property type="entry name" value="S-adenosyl-L-methionine-dependent methyltransferases"/>
    <property type="match status" value="1"/>
</dbReference>
<protein>
    <recommendedName>
        <fullName evidence="1">Ubiquinone biosynthesis O-methyltransferase</fullName>
    </recommendedName>
    <alternativeName>
        <fullName evidence="1">2-polyprenyl-6-hydroxyphenol methylase</fullName>
        <ecNumber evidence="1">2.1.1.222</ecNumber>
    </alternativeName>
    <alternativeName>
        <fullName evidence="1">3-demethylubiquinone 3-O-methyltransferase</fullName>
        <ecNumber evidence="1">2.1.1.64</ecNumber>
    </alternativeName>
</protein>